<accession>P45119</accession>
<reference key="1">
    <citation type="journal article" date="1995" name="Science">
        <title>Whole-genome random sequencing and assembly of Haemophilus influenzae Rd.</title>
        <authorList>
            <person name="Fleischmann R.D."/>
            <person name="Adams M.D."/>
            <person name="White O."/>
            <person name="Clayton R.A."/>
            <person name="Kirkness E.F."/>
            <person name="Kerlavage A.R."/>
            <person name="Bult C.J."/>
            <person name="Tomb J.-F."/>
            <person name="Dougherty B.A."/>
            <person name="Merrick J.M."/>
            <person name="McKenney K."/>
            <person name="Sutton G.G."/>
            <person name="FitzHugh W."/>
            <person name="Fields C.A."/>
            <person name="Gocayne J.D."/>
            <person name="Scott J.D."/>
            <person name="Shirley R."/>
            <person name="Liu L.-I."/>
            <person name="Glodek A."/>
            <person name="Kelley J.M."/>
            <person name="Weidman J.F."/>
            <person name="Phillips C.A."/>
            <person name="Spriggs T."/>
            <person name="Hedblom E."/>
            <person name="Cotton M.D."/>
            <person name="Utterback T.R."/>
            <person name="Hanna M.C."/>
            <person name="Nguyen D.T."/>
            <person name="Saudek D.M."/>
            <person name="Brandon R.C."/>
            <person name="Fine L.D."/>
            <person name="Fritchman J.L."/>
            <person name="Fuhrmann J.L."/>
            <person name="Geoghagen N.S.M."/>
            <person name="Gnehm C.L."/>
            <person name="McDonald L.A."/>
            <person name="Small K.V."/>
            <person name="Fraser C.M."/>
            <person name="Smith H.O."/>
            <person name="Venter J.C."/>
        </authorList>
    </citation>
    <scope>NUCLEOTIDE SEQUENCE [LARGE SCALE GENOMIC DNA]</scope>
    <source>
        <strain>ATCC 51907 / DSM 11121 / KW20 / Rd</strain>
    </source>
</reference>
<keyword id="KW-0560">Oxidoreductase</keyword>
<keyword id="KW-0670">Pyruvate</keyword>
<keyword id="KW-1185">Reference proteome</keyword>
<keyword id="KW-0786">Thiamine pyrophosphate</keyword>
<protein>
    <recommendedName>
        <fullName>Pyruvate dehydrogenase E1 component</fullName>
        <shortName>PDH E1 component</shortName>
        <ecNumber>1.2.4.1</ecNumber>
    </recommendedName>
</protein>
<comment type="function">
    <text evidence="1">Component of the pyruvate dehydrogenase (PDH) complex, that catalyzes the overall conversion of pyruvate to acetyl-CoA and CO(2).</text>
</comment>
<comment type="catalytic activity">
    <reaction>
        <text>N(6)-[(R)-lipoyl]-L-lysyl-[protein] + pyruvate + H(+) = N(6)-[(R)-S(8)-acetyldihydrolipoyl]-L-lysyl-[protein] + CO2</text>
        <dbReference type="Rhea" id="RHEA:19189"/>
        <dbReference type="Rhea" id="RHEA-COMP:10474"/>
        <dbReference type="Rhea" id="RHEA-COMP:10478"/>
        <dbReference type="ChEBI" id="CHEBI:15361"/>
        <dbReference type="ChEBI" id="CHEBI:15378"/>
        <dbReference type="ChEBI" id="CHEBI:16526"/>
        <dbReference type="ChEBI" id="CHEBI:83099"/>
        <dbReference type="ChEBI" id="CHEBI:83111"/>
        <dbReference type="EC" id="1.2.4.1"/>
    </reaction>
</comment>
<comment type="cofactor">
    <cofactor evidence="1">
        <name>thiamine diphosphate</name>
        <dbReference type="ChEBI" id="CHEBI:58937"/>
    </cofactor>
</comment>
<comment type="subunit">
    <text evidence="1">Homodimer. Part of the PDH complex, consisting of multiple copies of pyruvate dehydrogenase (E1), dihydrolipoamide acetyltransferase (E2) and lipoamide dehydrogenase (E3).</text>
</comment>
<proteinExistence type="inferred from homology"/>
<evidence type="ECO:0000250" key="1"/>
<dbReference type="EC" id="1.2.4.1"/>
<dbReference type="EMBL" id="L42023">
    <property type="protein sequence ID" value="AAC22886.1"/>
    <property type="molecule type" value="Genomic_DNA"/>
</dbReference>
<dbReference type="PIR" id="A64112">
    <property type="entry name" value="A64112"/>
</dbReference>
<dbReference type="RefSeq" id="NP_439389.1">
    <property type="nucleotide sequence ID" value="NC_000907.1"/>
</dbReference>
<dbReference type="SMR" id="P45119"/>
<dbReference type="STRING" id="71421.HI_1233"/>
<dbReference type="EnsemblBacteria" id="AAC22886">
    <property type="protein sequence ID" value="AAC22886"/>
    <property type="gene ID" value="HI_1233"/>
</dbReference>
<dbReference type="KEGG" id="hin:HI_1233"/>
<dbReference type="PATRIC" id="fig|71421.8.peg.1285"/>
<dbReference type="eggNOG" id="COG2609">
    <property type="taxonomic scope" value="Bacteria"/>
</dbReference>
<dbReference type="HOGENOM" id="CLU_009154_2_0_6"/>
<dbReference type="OrthoDB" id="9759664at2"/>
<dbReference type="PhylomeDB" id="P45119"/>
<dbReference type="BioCyc" id="HINF71421:G1GJ1-1264-MONOMER"/>
<dbReference type="Proteomes" id="UP000000579">
    <property type="component" value="Chromosome"/>
</dbReference>
<dbReference type="GO" id="GO:0004739">
    <property type="term" value="F:pyruvate dehydrogenase (acetyl-transferring) activity"/>
    <property type="evidence" value="ECO:0007669"/>
    <property type="project" value="UniProtKB-EC"/>
</dbReference>
<dbReference type="CDD" id="cd02017">
    <property type="entry name" value="TPP_E1_EcPDC_like"/>
    <property type="match status" value="1"/>
</dbReference>
<dbReference type="FunFam" id="3.40.50.970:FF:000009">
    <property type="entry name" value="Pyruvate dehydrogenase E1 component"/>
    <property type="match status" value="1"/>
</dbReference>
<dbReference type="FunFam" id="3.40.50.970:FF:000011">
    <property type="entry name" value="Pyruvate dehydrogenase E1 component"/>
    <property type="match status" value="1"/>
</dbReference>
<dbReference type="Gene3D" id="3.40.50.920">
    <property type="match status" value="1"/>
</dbReference>
<dbReference type="Gene3D" id="3.40.50.970">
    <property type="match status" value="2"/>
</dbReference>
<dbReference type="InterPro" id="IPR035807">
    <property type="entry name" value="PDC_E1_N"/>
</dbReference>
<dbReference type="InterPro" id="IPR051157">
    <property type="entry name" value="PDH/Transketolase"/>
</dbReference>
<dbReference type="InterPro" id="IPR004660">
    <property type="entry name" value="PDH_E1"/>
</dbReference>
<dbReference type="InterPro" id="IPR041621">
    <property type="entry name" value="PDH_E1_M"/>
</dbReference>
<dbReference type="InterPro" id="IPR029061">
    <property type="entry name" value="THDP-binding"/>
</dbReference>
<dbReference type="InterPro" id="IPR009014">
    <property type="entry name" value="Transketo_C/PFOR_II"/>
</dbReference>
<dbReference type="InterPro" id="IPR055152">
    <property type="entry name" value="Transketolase-like_C_2"/>
</dbReference>
<dbReference type="InterPro" id="IPR005474">
    <property type="entry name" value="Transketolase_N"/>
</dbReference>
<dbReference type="NCBIfam" id="TIGR00759">
    <property type="entry name" value="aceE"/>
    <property type="match status" value="1"/>
</dbReference>
<dbReference type="PANTHER" id="PTHR43825">
    <property type="entry name" value="PYRUVATE DEHYDROGENASE E1 COMPONENT"/>
    <property type="match status" value="1"/>
</dbReference>
<dbReference type="PANTHER" id="PTHR43825:SF3">
    <property type="entry name" value="PYRUVATE DEHYDROGENASE E1 COMPONENT"/>
    <property type="match status" value="1"/>
</dbReference>
<dbReference type="Pfam" id="PF17831">
    <property type="entry name" value="PDH_E1_M"/>
    <property type="match status" value="1"/>
</dbReference>
<dbReference type="Pfam" id="PF22613">
    <property type="entry name" value="Transketolase_C_1"/>
    <property type="match status" value="1"/>
</dbReference>
<dbReference type="Pfam" id="PF00456">
    <property type="entry name" value="Transketolase_N"/>
    <property type="match status" value="1"/>
</dbReference>
<dbReference type="PIRSF" id="PIRSF000156">
    <property type="entry name" value="Pyruvate_dh_E1"/>
    <property type="match status" value="1"/>
</dbReference>
<dbReference type="SUPFAM" id="SSF52518">
    <property type="entry name" value="Thiamin diphosphate-binding fold (THDP-binding)"/>
    <property type="match status" value="2"/>
</dbReference>
<dbReference type="SUPFAM" id="SSF52922">
    <property type="entry name" value="TK C-terminal domain-like"/>
    <property type="match status" value="1"/>
</dbReference>
<feature type="chain" id="PRO_0000162245" description="Pyruvate dehydrogenase E1 component">
    <location>
        <begin position="1"/>
        <end position="886"/>
    </location>
</feature>
<sequence length="886" mass="99131">MSEILKNDVDPIETQDWLQSLDSLIREEGVERAQYIVEQVIGQARTSGVSLPTGVTTDYVNTIPVAEQPAYPGDHAIERRIRSAVRWNAIAMVLRSQKKDLDLGGHISTFQSAATMYEVCYNHFFKAATEKNGGDLIFFQGHAAPGMYARAFLEGRLTEEQMDNFRQEAFTDGLSSYPHPKLMPEFWQFSTVSMGLGPVNAIYQARFLKYLDNRGLKDTKDQKVYAFLGDGEMDEIESKGALTFAAREHLDNLIFTISCNLQRLDGPVNGNGKIVQELEGLFTGAGWEVIKVLWGSDWDKLFAKDTSGKLTQLMMEVVDGDYLTFKSKDGAYIREHFFGRYPETAALVADMTDDEIWALRRGAHDSEKLYAAYAKAQNATKPVVILAHQVKGYKIPEAESKNTAHQSKKMSYESLKGFRDFFELPLTDEQVEKLEYIKFAEGTPEYEYLHGHRKALNGYVPARRTKFDVEYKVPALEEFKALLEEQPRGISTTMAFTRALNILLKDKNIGKTIVPMIADEARTFGMEGLFRQVGIYNPHGQNYIPSDRDLVAYYREAKDGQVLQEGINELGATASWLAAANSYSVNNQPMIPFFIYYSMFGFQRVGDMMWAAGDQLARGFMVGGTSGRTTLNGEGLQHEDGHSHIQAGIIPNCITYDPSFAFEVAVIMQDGINRMYGEKQEDVFYYMTTLNEVMDQPAMPAGAEEGIRKGLYKFETVEGKKGKGHVQLLGSGAIMRHVREAAQILANDYGVTSDVFSAPSFNELAREGHDAARWNLLHPTETQRVPYVAQVLADLPTVASTDYVKGYADQIRAFVPSKHYHVLGTDGFGRSDSRANLREHFEVDARYVVVAALSQLAKEGTVSNQVVADAIAKFGLNVDRINPLYA</sequence>
<organism>
    <name type="scientific">Haemophilus influenzae (strain ATCC 51907 / DSM 11121 / KW20 / Rd)</name>
    <dbReference type="NCBI Taxonomy" id="71421"/>
    <lineage>
        <taxon>Bacteria</taxon>
        <taxon>Pseudomonadati</taxon>
        <taxon>Pseudomonadota</taxon>
        <taxon>Gammaproteobacteria</taxon>
        <taxon>Pasteurellales</taxon>
        <taxon>Pasteurellaceae</taxon>
        <taxon>Haemophilus</taxon>
    </lineage>
</organism>
<gene>
    <name type="primary">aceE</name>
    <name type="ordered locus">HI_1233</name>
</gene>
<name>ODP1_HAEIN</name>